<feature type="chain" id="PRO_0000274765" description="Phosphonates import ATP-binding protein PhnC">
    <location>
        <begin position="1"/>
        <end position="259"/>
    </location>
</feature>
<feature type="domain" description="ABC transporter" evidence="1">
    <location>
        <begin position="4"/>
        <end position="245"/>
    </location>
</feature>
<feature type="binding site" evidence="1">
    <location>
        <begin position="37"/>
        <end position="44"/>
    </location>
    <ligand>
        <name>ATP</name>
        <dbReference type="ChEBI" id="CHEBI:30616"/>
    </ligand>
</feature>
<sequence length="259" mass="28231">MSAISIQSVTKRFPNGFEALKGIDTEIQTGSFTVVLGPSGAGKSTLLRLMNGLETPTTGAVRIDGETVDGHRLRHIRSKVAMVFQQFNLVERLSVVTNVLTGRLAQRSWVGSVFYLFRQEDLGIAREALARVGLTDKAWSRADKLSGGQQQRVGIARALAQRPKVILADEPVASLDPVSSEEIMALLREICDRDGITVVVNLHQVDLAKRFADRIIGMNAGRVVFDGTPAELSAQALRTIYQREGIEDDTSLDLALAYA</sequence>
<organism>
    <name type="scientific">Thiobacillus denitrificans (strain ATCC 25259 / T1)</name>
    <dbReference type="NCBI Taxonomy" id="292415"/>
    <lineage>
        <taxon>Bacteria</taxon>
        <taxon>Pseudomonadati</taxon>
        <taxon>Pseudomonadota</taxon>
        <taxon>Betaproteobacteria</taxon>
        <taxon>Nitrosomonadales</taxon>
        <taxon>Thiobacillaceae</taxon>
        <taxon>Thiobacillus</taxon>
    </lineage>
</organism>
<accession>Q3SGJ8</accession>
<name>PHNC_THIDA</name>
<reference key="1">
    <citation type="journal article" date="2006" name="J. Bacteriol.">
        <title>The genome sequence of the obligately chemolithoautotrophic, facultatively anaerobic bacterium Thiobacillus denitrificans.</title>
        <authorList>
            <person name="Beller H.R."/>
            <person name="Chain P.S."/>
            <person name="Letain T.E."/>
            <person name="Chakicherla A."/>
            <person name="Larimer F.W."/>
            <person name="Richardson P.M."/>
            <person name="Coleman M.A."/>
            <person name="Wood A.P."/>
            <person name="Kelly D.P."/>
        </authorList>
    </citation>
    <scope>NUCLEOTIDE SEQUENCE [LARGE SCALE GENOMIC DNA]</scope>
    <source>
        <strain>ATCC 25259 / T1</strain>
    </source>
</reference>
<keyword id="KW-0067">ATP-binding</keyword>
<keyword id="KW-0997">Cell inner membrane</keyword>
<keyword id="KW-1003">Cell membrane</keyword>
<keyword id="KW-0472">Membrane</keyword>
<keyword id="KW-0547">Nucleotide-binding</keyword>
<keyword id="KW-0918">Phosphonate transport</keyword>
<keyword id="KW-1185">Reference proteome</keyword>
<keyword id="KW-1278">Translocase</keyword>
<keyword id="KW-0813">Transport</keyword>
<proteinExistence type="inferred from homology"/>
<evidence type="ECO:0000255" key="1">
    <source>
        <dbReference type="HAMAP-Rule" id="MF_01713"/>
    </source>
</evidence>
<dbReference type="EC" id="7.3.2.2" evidence="1"/>
<dbReference type="EMBL" id="CP000116">
    <property type="protein sequence ID" value="AAZ98252.1"/>
    <property type="molecule type" value="Genomic_DNA"/>
</dbReference>
<dbReference type="RefSeq" id="WP_011312811.1">
    <property type="nucleotide sequence ID" value="NC_007404.1"/>
</dbReference>
<dbReference type="SMR" id="Q3SGJ8"/>
<dbReference type="STRING" id="292415.Tbd_2299"/>
<dbReference type="KEGG" id="tbd:Tbd_2299"/>
<dbReference type="eggNOG" id="COG3638">
    <property type="taxonomic scope" value="Bacteria"/>
</dbReference>
<dbReference type="HOGENOM" id="CLU_000604_1_22_4"/>
<dbReference type="OrthoDB" id="9802264at2"/>
<dbReference type="Proteomes" id="UP000008291">
    <property type="component" value="Chromosome"/>
</dbReference>
<dbReference type="GO" id="GO:0005886">
    <property type="term" value="C:plasma membrane"/>
    <property type="evidence" value="ECO:0007669"/>
    <property type="project" value="UniProtKB-SubCell"/>
</dbReference>
<dbReference type="GO" id="GO:0015416">
    <property type="term" value="F:ABC-type phosphonate transporter activity"/>
    <property type="evidence" value="ECO:0007669"/>
    <property type="project" value="UniProtKB-EC"/>
</dbReference>
<dbReference type="GO" id="GO:0005524">
    <property type="term" value="F:ATP binding"/>
    <property type="evidence" value="ECO:0007669"/>
    <property type="project" value="UniProtKB-KW"/>
</dbReference>
<dbReference type="GO" id="GO:0016887">
    <property type="term" value="F:ATP hydrolysis activity"/>
    <property type="evidence" value="ECO:0007669"/>
    <property type="project" value="InterPro"/>
</dbReference>
<dbReference type="CDD" id="cd03256">
    <property type="entry name" value="ABC_PhnC_transporter"/>
    <property type="match status" value="1"/>
</dbReference>
<dbReference type="Gene3D" id="3.40.50.300">
    <property type="entry name" value="P-loop containing nucleotide triphosphate hydrolases"/>
    <property type="match status" value="1"/>
</dbReference>
<dbReference type="InterPro" id="IPR003593">
    <property type="entry name" value="AAA+_ATPase"/>
</dbReference>
<dbReference type="InterPro" id="IPR003439">
    <property type="entry name" value="ABC_transporter-like_ATP-bd"/>
</dbReference>
<dbReference type="InterPro" id="IPR017871">
    <property type="entry name" value="ABC_transporter-like_CS"/>
</dbReference>
<dbReference type="InterPro" id="IPR012693">
    <property type="entry name" value="ABC_transpr_PhnC"/>
</dbReference>
<dbReference type="InterPro" id="IPR050086">
    <property type="entry name" value="MetN_ABC_transporter-like"/>
</dbReference>
<dbReference type="InterPro" id="IPR027417">
    <property type="entry name" value="P-loop_NTPase"/>
</dbReference>
<dbReference type="NCBIfam" id="TIGR02315">
    <property type="entry name" value="ABC_phnC"/>
    <property type="match status" value="1"/>
</dbReference>
<dbReference type="PANTHER" id="PTHR43166">
    <property type="entry name" value="AMINO ACID IMPORT ATP-BINDING PROTEIN"/>
    <property type="match status" value="1"/>
</dbReference>
<dbReference type="PANTHER" id="PTHR43166:SF6">
    <property type="entry name" value="PHOSPHONATES IMPORT ATP-BINDING PROTEIN PHNC"/>
    <property type="match status" value="1"/>
</dbReference>
<dbReference type="Pfam" id="PF00005">
    <property type="entry name" value="ABC_tran"/>
    <property type="match status" value="1"/>
</dbReference>
<dbReference type="SMART" id="SM00382">
    <property type="entry name" value="AAA"/>
    <property type="match status" value="1"/>
</dbReference>
<dbReference type="SUPFAM" id="SSF52540">
    <property type="entry name" value="P-loop containing nucleoside triphosphate hydrolases"/>
    <property type="match status" value="1"/>
</dbReference>
<dbReference type="PROSITE" id="PS00211">
    <property type="entry name" value="ABC_TRANSPORTER_1"/>
    <property type="match status" value="1"/>
</dbReference>
<dbReference type="PROSITE" id="PS50893">
    <property type="entry name" value="ABC_TRANSPORTER_2"/>
    <property type="match status" value="1"/>
</dbReference>
<dbReference type="PROSITE" id="PS51249">
    <property type="entry name" value="PHNC"/>
    <property type="match status" value="1"/>
</dbReference>
<comment type="function">
    <text evidence="1">Part of the ABC transporter complex PhnCDE involved in phosphonates import. Responsible for energy coupling to the transport system.</text>
</comment>
<comment type="catalytic activity">
    <reaction evidence="1">
        <text>phosphonate(out) + ATP + H2O = phosphonate(in) + ADP + phosphate + H(+)</text>
        <dbReference type="Rhea" id="RHEA:18065"/>
        <dbReference type="ChEBI" id="CHEBI:15377"/>
        <dbReference type="ChEBI" id="CHEBI:15378"/>
        <dbReference type="ChEBI" id="CHEBI:16215"/>
        <dbReference type="ChEBI" id="CHEBI:30616"/>
        <dbReference type="ChEBI" id="CHEBI:43474"/>
        <dbReference type="ChEBI" id="CHEBI:456216"/>
        <dbReference type="EC" id="7.3.2.2"/>
    </reaction>
</comment>
<comment type="subunit">
    <text evidence="1">The complex is composed of two ATP-binding proteins (PhnC), two transmembrane proteins (PhnE) and a solute-binding protein (PhnD).</text>
</comment>
<comment type="subcellular location">
    <subcellularLocation>
        <location evidence="1">Cell inner membrane</location>
        <topology evidence="1">Peripheral membrane protein</topology>
    </subcellularLocation>
</comment>
<comment type="similarity">
    <text evidence="1">Belongs to the ABC transporter superfamily. Phosphonates importer (TC 3.A.1.9.1) family.</text>
</comment>
<protein>
    <recommendedName>
        <fullName evidence="1">Phosphonates import ATP-binding protein PhnC</fullName>
        <ecNumber evidence="1">7.3.2.2</ecNumber>
    </recommendedName>
</protein>
<gene>
    <name evidence="1" type="primary">phnC</name>
    <name type="ordered locus">Tbd_2299</name>
</gene>